<reference key="1">
    <citation type="journal article" date="1989" name="Mol. Gen. Genet.">
        <title>Characterization of the ColE1 mobilization region and its protein products.</title>
        <authorList>
            <person name="Boyd A.C."/>
            <person name="Archer J.A.K."/>
            <person name="Sherratt D.J."/>
        </authorList>
    </citation>
    <scope>NUCLEOTIDE SEQUENCE [GENOMIC DNA]</scope>
</reference>
<reference key="2">
    <citation type="journal article" date="2009" name="J. Bacteriol.">
        <title>Analysis of ColE1 MbeC unveils an extended ribbon-helix-helix family of nicking accessory proteins.</title>
        <authorList>
            <person name="Varsaki A."/>
            <person name="Moncalian G."/>
            <person name="Garcillan-Barcia M.P."/>
            <person name="Drainas C."/>
            <person name="de la Cruz F."/>
        </authorList>
    </citation>
    <scope>FUNCTION</scope>
    <scope>DETERMINATION OF TRANSCRIPTIONAL START SITE</scope>
    <scope>SUBUNIT</scope>
    <scope>DOMAIN</scope>
    <scope>MUTAGENESIS OF ARG-13</scope>
    <scope>IDENTIFICATION BY MASS SPECTROMETRY</scope>
</reference>
<evidence type="ECO:0000269" key="1">
    <source>
    </source>
</evidence>
<evidence type="ECO:0000305" key="2"/>
<dbReference type="EMBL" id="X15873">
    <property type="protein sequence ID" value="CAA33882.1"/>
    <property type="status" value="ALT_INIT"/>
    <property type="molecule type" value="Genomic_DNA"/>
</dbReference>
<dbReference type="PIR" id="JQ0389">
    <property type="entry name" value="JQ0389"/>
</dbReference>
<dbReference type="RefSeq" id="NP_040368.1">
    <property type="nucleotide sequence ID" value="NC_001371.1"/>
</dbReference>
<dbReference type="RefSeq" id="YP_009062852.1">
    <property type="nucleotide sequence ID" value="NC_025013.1"/>
</dbReference>
<dbReference type="SMR" id="P13657"/>
<dbReference type="IntAct" id="P13657">
    <property type="interactions" value="1"/>
</dbReference>
<dbReference type="MINT" id="P13657"/>
<dbReference type="GO" id="GO:0003677">
    <property type="term" value="F:DNA binding"/>
    <property type="evidence" value="ECO:0007669"/>
    <property type="project" value="UniProtKB-KW"/>
</dbReference>
<dbReference type="InterPro" id="IPR008687">
    <property type="entry name" value="MobC"/>
</dbReference>
<dbReference type="Pfam" id="PF05713">
    <property type="entry name" value="MobC"/>
    <property type="match status" value="1"/>
</dbReference>
<comment type="function">
    <text evidence="1">Required for efficient mobilization of ColE1 plasmid and is thus essential to promote the specific transfer of the plasmid during conjugation. Probably functions by inducing DNA bending, helping the MbeA relaxase to melt the DNA around the nic site and cleave the phosphodiester bond. Binds specifically double-stranded DNA (dsDNA) containing the ColE1 oriT but does not recognize the inverted repeat (IR).</text>
</comment>
<comment type="subunit">
    <text evidence="1">Homodimer. Interacts with MbeA and MbeB to form the relaxosome.</text>
</comment>
<comment type="interaction">
    <interactant intactId="EBI-7798318">
        <id>P13657</id>
    </interactant>
    <interactant intactId="EBI-7798346">
        <id>P13658</id>
        <label>mbeA</label>
    </interactant>
    <organismsDiffer>false</organismsDiffer>
    <experiments>2</experiments>
</comment>
<comment type="domain">
    <text evidence="1">Consists of two domains: the N-terminal domain, which contains a predicted ribbon-helix-helix (RHH) DNA-binding domain, and the C-terminal domain, which comprises a signature shared by nicking accessory proteins.</text>
</comment>
<comment type="similarity">
    <text evidence="2">To E.coli MbaC and MbkC.</text>
</comment>
<comment type="sequence caution" evidence="2">
    <conflict type="erroneous initiation">
        <sequence resource="EMBL-CDS" id="CAA33882"/>
    </conflict>
</comment>
<gene>
    <name type="primary">mbeC</name>
</gene>
<sequence>MIPMKRERMLTIRVTDDEHARLLERCEGKQLAVWMRRVCLGEPVARSGKLPTLAPPLLRQLAAIGNNLNQTARKVNSGQWSSGDRVQVVAALMAIGDELRRLRLAVREQGARDDS</sequence>
<proteinExistence type="evidence at protein level"/>
<organism>
    <name type="scientific">Escherichia coli</name>
    <dbReference type="NCBI Taxonomy" id="562"/>
    <lineage>
        <taxon>Bacteria</taxon>
        <taxon>Pseudomonadati</taxon>
        <taxon>Pseudomonadota</taxon>
        <taxon>Gammaproteobacteria</taxon>
        <taxon>Enterobacterales</taxon>
        <taxon>Enterobacteriaceae</taxon>
        <taxon>Escherichia</taxon>
    </lineage>
</organism>
<name>MBEC_ECOLX</name>
<feature type="chain" id="PRO_0000068402" description="Mobilization protein MbeC">
    <location>
        <begin position="1"/>
        <end position="115"/>
    </location>
</feature>
<feature type="mutagenesis site" description="Unable to bind either single- or double-stranded DNA. Reduces ColE1 mobilization by 3000-fold." evidence="1">
    <original>R</original>
    <variation>A</variation>
    <location>
        <position position="13"/>
    </location>
</feature>
<keyword id="KW-0184">Conjugation</keyword>
<keyword id="KW-0238">DNA-binding</keyword>
<keyword id="KW-0499">Mobility protein</keyword>
<keyword id="KW-0614">Plasmid</keyword>
<protein>
    <recommendedName>
        <fullName>Mobilization protein MbeC</fullName>
    </recommendedName>
    <alternativeName>
        <fullName>Conjugative accessory protein MbeC</fullName>
    </alternativeName>
</protein>
<geneLocation type="plasmid">
    <name>ColE1</name>
</geneLocation>
<accession>P13657</accession>